<dbReference type="EC" id="5.1.3.4" evidence="1"/>
<dbReference type="EMBL" id="AP009240">
    <property type="protein sequence ID" value="BAG80020.1"/>
    <property type="molecule type" value="Genomic_DNA"/>
</dbReference>
<dbReference type="RefSeq" id="WP_000916039.1">
    <property type="nucleotide sequence ID" value="NC_011415.1"/>
</dbReference>
<dbReference type="SMR" id="B6I2A3"/>
<dbReference type="KEGG" id="ecy:ECSE_4496"/>
<dbReference type="HOGENOM" id="CLU_006033_5_0_6"/>
<dbReference type="UniPathway" id="UPA00263">
    <property type="reaction ID" value="UER00380"/>
</dbReference>
<dbReference type="Proteomes" id="UP000008199">
    <property type="component" value="Chromosome"/>
</dbReference>
<dbReference type="GO" id="GO:0005829">
    <property type="term" value="C:cytosol"/>
    <property type="evidence" value="ECO:0007669"/>
    <property type="project" value="TreeGrafter"/>
</dbReference>
<dbReference type="GO" id="GO:0016832">
    <property type="term" value="F:aldehyde-lyase activity"/>
    <property type="evidence" value="ECO:0007669"/>
    <property type="project" value="TreeGrafter"/>
</dbReference>
<dbReference type="GO" id="GO:0008742">
    <property type="term" value="F:L-ribulose-phosphate 4-epimerase activity"/>
    <property type="evidence" value="ECO:0007669"/>
    <property type="project" value="UniProtKB-UniRule"/>
</dbReference>
<dbReference type="GO" id="GO:0008270">
    <property type="term" value="F:zinc ion binding"/>
    <property type="evidence" value="ECO:0007669"/>
    <property type="project" value="UniProtKB-UniRule"/>
</dbReference>
<dbReference type="GO" id="GO:0019854">
    <property type="term" value="P:L-ascorbic acid catabolic process"/>
    <property type="evidence" value="ECO:0007669"/>
    <property type="project" value="UniProtKB-UniRule"/>
</dbReference>
<dbReference type="GO" id="GO:0019323">
    <property type="term" value="P:pentose catabolic process"/>
    <property type="evidence" value="ECO:0007669"/>
    <property type="project" value="TreeGrafter"/>
</dbReference>
<dbReference type="CDD" id="cd00398">
    <property type="entry name" value="Aldolase_II"/>
    <property type="match status" value="1"/>
</dbReference>
<dbReference type="FunFam" id="3.40.225.10:FF:000001">
    <property type="entry name" value="L-ribulose-5-phosphate 4-epimerase UlaF"/>
    <property type="match status" value="1"/>
</dbReference>
<dbReference type="Gene3D" id="3.40.225.10">
    <property type="entry name" value="Class II aldolase/adducin N-terminal domain"/>
    <property type="match status" value="1"/>
</dbReference>
<dbReference type="HAMAP" id="MF_01952">
    <property type="entry name" value="UlaF"/>
    <property type="match status" value="1"/>
</dbReference>
<dbReference type="InterPro" id="IPR050197">
    <property type="entry name" value="Aldolase_class_II_sugar_metab"/>
</dbReference>
<dbReference type="InterPro" id="IPR001303">
    <property type="entry name" value="Aldolase_II/adducin_N"/>
</dbReference>
<dbReference type="InterPro" id="IPR036409">
    <property type="entry name" value="Aldolase_II/adducin_N_sf"/>
</dbReference>
<dbReference type="InterPro" id="IPR023499">
    <property type="entry name" value="UlaF"/>
</dbReference>
<dbReference type="NCBIfam" id="NF006047">
    <property type="entry name" value="PRK08193.1"/>
    <property type="match status" value="1"/>
</dbReference>
<dbReference type="NCBIfam" id="NF009003">
    <property type="entry name" value="PRK12348.1"/>
    <property type="match status" value="1"/>
</dbReference>
<dbReference type="PANTHER" id="PTHR22789">
    <property type="entry name" value="FUCULOSE PHOSPHATE ALDOLASE"/>
    <property type="match status" value="1"/>
</dbReference>
<dbReference type="PANTHER" id="PTHR22789:SF9">
    <property type="entry name" value="L-RIBULOSE-5-PHOSPHATE 4-EPIMERASE ULAF"/>
    <property type="match status" value="1"/>
</dbReference>
<dbReference type="Pfam" id="PF00596">
    <property type="entry name" value="Aldolase_II"/>
    <property type="match status" value="1"/>
</dbReference>
<dbReference type="SMART" id="SM01007">
    <property type="entry name" value="Aldolase_II"/>
    <property type="match status" value="1"/>
</dbReference>
<dbReference type="SUPFAM" id="SSF53639">
    <property type="entry name" value="AraD/HMP-PK domain-like"/>
    <property type="match status" value="1"/>
</dbReference>
<keyword id="KW-0119">Carbohydrate metabolism</keyword>
<keyword id="KW-0413">Isomerase</keyword>
<keyword id="KW-0479">Metal-binding</keyword>
<keyword id="KW-0862">Zinc</keyword>
<gene>
    <name evidence="1" type="primary">ulaF</name>
    <name type="ordered locus">ECSE_4496</name>
</gene>
<proteinExistence type="inferred from homology"/>
<feature type="chain" id="PRO_1000188848" description="L-ribulose-5-phosphate 4-epimerase UlaF">
    <location>
        <begin position="1"/>
        <end position="228"/>
    </location>
</feature>
<feature type="active site" description="Proton donor/acceptor" evidence="1">
    <location>
        <position position="118"/>
    </location>
</feature>
<feature type="active site" description="Proton donor/acceptor" evidence="1">
    <location>
        <position position="225"/>
    </location>
</feature>
<feature type="binding site" evidence="1">
    <location>
        <begin position="26"/>
        <end position="27"/>
    </location>
    <ligand>
        <name>substrate</name>
    </ligand>
</feature>
<feature type="binding site" evidence="1">
    <location>
        <begin position="43"/>
        <end position="44"/>
    </location>
    <ligand>
        <name>substrate</name>
    </ligand>
</feature>
<feature type="binding site" evidence="1">
    <location>
        <begin position="72"/>
        <end position="73"/>
    </location>
    <ligand>
        <name>substrate</name>
    </ligand>
</feature>
<feature type="binding site" evidence="1">
    <location>
        <position position="74"/>
    </location>
    <ligand>
        <name>Zn(2+)</name>
        <dbReference type="ChEBI" id="CHEBI:29105"/>
    </ligand>
</feature>
<feature type="binding site" evidence="1">
    <location>
        <position position="93"/>
    </location>
    <ligand>
        <name>Zn(2+)</name>
        <dbReference type="ChEBI" id="CHEBI:29105"/>
    </ligand>
</feature>
<feature type="binding site" evidence="1">
    <location>
        <position position="95"/>
    </location>
    <ligand>
        <name>Zn(2+)</name>
        <dbReference type="ChEBI" id="CHEBI:29105"/>
    </ligand>
</feature>
<feature type="binding site" evidence="1">
    <location>
        <position position="167"/>
    </location>
    <ligand>
        <name>Zn(2+)</name>
        <dbReference type="ChEBI" id="CHEBI:29105"/>
    </ligand>
</feature>
<name>ULAF_ECOSE</name>
<protein>
    <recommendedName>
        <fullName evidence="1">L-ribulose-5-phosphate 4-epimerase UlaF</fullName>
        <ecNumber evidence="1">5.1.3.4</ecNumber>
    </recommendedName>
    <alternativeName>
        <fullName evidence="1">L-ascorbate utilization protein F</fullName>
    </alternativeName>
    <alternativeName>
        <fullName evidence="1">Phosphoribulose isomerase</fullName>
    </alternativeName>
</protein>
<sequence>MLKLKQQVFEANMDLPRYGLVTFTWGNVSAIDRERGLVVIKPSGVAYETMKADDMVVVDMSGKVVEGEYRPSSDTATHLELYRRYPSLGGIVHTHSTHATAWAQAGLAIPALGTTHADYFFGDIPCTRGLSEEEVQGEYELNTGKVIIETLGNAEPLHTPGIVVYQHGPFAWGKDAHDAVHNAVVMEEVAKMAWIARGINPQLNHIDSFLMNKHFMRKHGPNAYYGQK</sequence>
<accession>B6I2A3</accession>
<organism>
    <name type="scientific">Escherichia coli (strain SE11)</name>
    <dbReference type="NCBI Taxonomy" id="409438"/>
    <lineage>
        <taxon>Bacteria</taxon>
        <taxon>Pseudomonadati</taxon>
        <taxon>Pseudomonadota</taxon>
        <taxon>Gammaproteobacteria</taxon>
        <taxon>Enterobacterales</taxon>
        <taxon>Enterobacteriaceae</taxon>
        <taxon>Escherichia</taxon>
    </lineage>
</organism>
<evidence type="ECO:0000255" key="1">
    <source>
        <dbReference type="HAMAP-Rule" id="MF_01952"/>
    </source>
</evidence>
<reference key="1">
    <citation type="journal article" date="2008" name="DNA Res.">
        <title>Complete genome sequence and comparative analysis of the wild-type commensal Escherichia coli strain SE11 isolated from a healthy adult.</title>
        <authorList>
            <person name="Oshima K."/>
            <person name="Toh H."/>
            <person name="Ogura Y."/>
            <person name="Sasamoto H."/>
            <person name="Morita H."/>
            <person name="Park S.-H."/>
            <person name="Ooka T."/>
            <person name="Iyoda S."/>
            <person name="Taylor T.D."/>
            <person name="Hayashi T."/>
            <person name="Itoh K."/>
            <person name="Hattori M."/>
        </authorList>
    </citation>
    <scope>NUCLEOTIDE SEQUENCE [LARGE SCALE GENOMIC DNA]</scope>
    <source>
        <strain>SE11</strain>
    </source>
</reference>
<comment type="function">
    <text evidence="1">Catalyzes the isomerization of L-ribulose 5-phosphate to D-xylulose 5-phosphate. Is involved in the anaerobic L-ascorbate utilization.</text>
</comment>
<comment type="catalytic activity">
    <reaction evidence="1">
        <text>L-ribulose 5-phosphate = D-xylulose 5-phosphate</text>
        <dbReference type="Rhea" id="RHEA:22368"/>
        <dbReference type="ChEBI" id="CHEBI:57737"/>
        <dbReference type="ChEBI" id="CHEBI:58226"/>
        <dbReference type="EC" id="5.1.3.4"/>
    </reaction>
</comment>
<comment type="cofactor">
    <cofactor evidence="1">
        <name>Zn(2+)</name>
        <dbReference type="ChEBI" id="CHEBI:29105"/>
    </cofactor>
    <text evidence="1">Binds 1 zinc ion per subunit.</text>
</comment>
<comment type="pathway">
    <text evidence="1">Cofactor degradation; L-ascorbate degradation; D-xylulose 5-phosphate from L-ascorbate: step 4/4.</text>
</comment>
<comment type="induction">
    <text evidence="1">Induced by L-ascorbate. Repressed by UlaR.</text>
</comment>
<comment type="similarity">
    <text evidence="1">Belongs to the aldolase class II family. AraD/FucA subfamily.</text>
</comment>